<sequence length="285" mass="32880">MDFSHSQQNECARSSVACKWSLAEAQQKLNSLALHNSESMDQEQAMAQAELSELQRSEEEWRRKEAALSQGENWGLPTTDGLNQDVFNKSFINQVKKSIDGEDQSISFIQKYEAKIRHFGMLSRWNDSQHFLSEYPDLVSEETAKYLLLWCSHLESEQKTALMEQVAHQAVVMQFIIEMAKSCNMDPRGCFRLFFQKAKEEKEGYFEAFKSELEILKSKVRQHAECQRYEAAILRKPAFPPDLGHMGTQQCHQKDVLQSHPNAAVCHLNPMEHAEDEDLKMMDTL</sequence>
<gene>
    <name type="primary">cdc37l1</name>
    <name type="ORF">TEgg077n10.1</name>
</gene>
<comment type="function">
    <text evidence="1">Co-chaperone that binds to numerous proteins and promotes their interaction with Hsp70 and Hsp90.</text>
</comment>
<comment type="subunit">
    <text evidence="1">Forms complexes with Hsp70 and Hsp90.</text>
</comment>
<comment type="subcellular location">
    <subcellularLocation>
        <location evidence="1">Cytoplasm</location>
    </subcellularLocation>
</comment>
<comment type="similarity">
    <text evidence="4">Belongs to the CDC37 family.</text>
</comment>
<organism>
    <name type="scientific">Xenopus tropicalis</name>
    <name type="common">Western clawed frog</name>
    <name type="synonym">Silurana tropicalis</name>
    <dbReference type="NCBI Taxonomy" id="8364"/>
    <lineage>
        <taxon>Eukaryota</taxon>
        <taxon>Metazoa</taxon>
        <taxon>Chordata</taxon>
        <taxon>Craniata</taxon>
        <taxon>Vertebrata</taxon>
        <taxon>Euteleostomi</taxon>
        <taxon>Amphibia</taxon>
        <taxon>Batrachia</taxon>
        <taxon>Anura</taxon>
        <taxon>Pipoidea</taxon>
        <taxon>Pipidae</taxon>
        <taxon>Xenopodinae</taxon>
        <taxon>Xenopus</taxon>
        <taxon>Silurana</taxon>
    </lineage>
</organism>
<feature type="chain" id="PRO_0000318526" description="Hsp90 co-chaperone Cdc37-like 1">
    <location>
        <begin position="1"/>
        <end position="285"/>
    </location>
</feature>
<feature type="region of interest" description="Disordered" evidence="3">
    <location>
        <begin position="34"/>
        <end position="54"/>
    </location>
</feature>
<feature type="coiled-coil region" evidence="2">
    <location>
        <begin position="35"/>
        <end position="73"/>
    </location>
</feature>
<keyword id="KW-0143">Chaperone</keyword>
<keyword id="KW-0175">Coiled coil</keyword>
<keyword id="KW-0963">Cytoplasm</keyword>
<keyword id="KW-1185">Reference proteome</keyword>
<dbReference type="EMBL" id="CR760680">
    <property type="protein sequence ID" value="CAJ82202.1"/>
    <property type="molecule type" value="mRNA"/>
</dbReference>
<dbReference type="RefSeq" id="NP_001037905.1">
    <property type="nucleotide sequence ID" value="NM_001044440.1"/>
</dbReference>
<dbReference type="SMR" id="Q28HY7"/>
<dbReference type="FunCoup" id="Q28HY7">
    <property type="interactions" value="961"/>
</dbReference>
<dbReference type="STRING" id="8364.ENSXETP00000053616"/>
<dbReference type="PaxDb" id="8364-ENSXETP00000001311"/>
<dbReference type="GeneID" id="733511"/>
<dbReference type="KEGG" id="xtr:733511"/>
<dbReference type="AGR" id="Xenbase:XB-GENE-984706"/>
<dbReference type="CTD" id="55664"/>
<dbReference type="Xenbase" id="XB-GENE-984706">
    <property type="gene designation" value="cdc37l1"/>
</dbReference>
<dbReference type="eggNOG" id="KOG2260">
    <property type="taxonomic scope" value="Eukaryota"/>
</dbReference>
<dbReference type="InParanoid" id="Q28HY7"/>
<dbReference type="OMA" id="YAAKCRN"/>
<dbReference type="OrthoDB" id="440202at2759"/>
<dbReference type="Reactome" id="R-XTR-114608">
    <property type="pathway name" value="Platelet degranulation"/>
</dbReference>
<dbReference type="Proteomes" id="UP000008143">
    <property type="component" value="Chromosome 1"/>
</dbReference>
<dbReference type="GO" id="GO:0005737">
    <property type="term" value="C:cytoplasm"/>
    <property type="evidence" value="ECO:0007669"/>
    <property type="project" value="UniProtKB-SubCell"/>
</dbReference>
<dbReference type="FunFam" id="1.20.58.610:FF:000001">
    <property type="entry name" value="Hsp90 co-chaperone Cdc37-like 1"/>
    <property type="match status" value="1"/>
</dbReference>
<dbReference type="Gene3D" id="1.20.58.610">
    <property type="entry name" value="Cdc37, Hsp90 binding domain"/>
    <property type="match status" value="1"/>
</dbReference>
<dbReference type="InterPro" id="IPR004918">
    <property type="entry name" value="Cdc37"/>
</dbReference>
<dbReference type="InterPro" id="IPR013874">
    <property type="entry name" value="Cdc37_Hsp90-bd"/>
</dbReference>
<dbReference type="InterPro" id="IPR038189">
    <property type="entry name" value="Cdc37_Hsp90-bd_sf"/>
</dbReference>
<dbReference type="PANTHER" id="PTHR12800">
    <property type="entry name" value="CDC37-RELATED"/>
    <property type="match status" value="1"/>
</dbReference>
<dbReference type="PANTHER" id="PTHR12800:SF2">
    <property type="entry name" value="HSP90 CO-CHAPERONE CDC37-LIKE 1"/>
    <property type="match status" value="1"/>
</dbReference>
<dbReference type="Pfam" id="PF08565">
    <property type="entry name" value="CDC37_M"/>
    <property type="match status" value="1"/>
</dbReference>
<dbReference type="SMART" id="SM01070">
    <property type="entry name" value="CDC37_M"/>
    <property type="match status" value="1"/>
</dbReference>
<dbReference type="SUPFAM" id="SSF101391">
    <property type="entry name" value="Hsp90 co-chaperone CDC37"/>
    <property type="match status" value="1"/>
</dbReference>
<reference key="1">
    <citation type="submission" date="2006-10" db="EMBL/GenBank/DDBJ databases">
        <authorList>
            <consortium name="Sanger Xenopus tropicalis EST/cDNA project"/>
        </authorList>
    </citation>
    <scope>NUCLEOTIDE SEQUENCE [LARGE SCALE MRNA]</scope>
    <source>
        <tissue>Egg</tissue>
    </source>
</reference>
<evidence type="ECO:0000250" key="1"/>
<evidence type="ECO:0000255" key="2"/>
<evidence type="ECO:0000256" key="3">
    <source>
        <dbReference type="SAM" id="MobiDB-lite"/>
    </source>
</evidence>
<evidence type="ECO:0000305" key="4"/>
<name>CD37L_XENTR</name>
<accession>Q28HY7</accession>
<proteinExistence type="evidence at transcript level"/>
<protein>
    <recommendedName>
        <fullName>Hsp90 co-chaperone Cdc37-like 1</fullName>
    </recommendedName>
</protein>